<dbReference type="EC" id="2.2.1.7" evidence="1"/>
<dbReference type="EMBL" id="CP000672">
    <property type="protein sequence ID" value="ABQ99311.1"/>
    <property type="molecule type" value="Genomic_DNA"/>
</dbReference>
<dbReference type="SMR" id="A5UEV6"/>
<dbReference type="KEGG" id="hiq:CGSHiGG_01080"/>
<dbReference type="HOGENOM" id="CLU_009227_1_4_6"/>
<dbReference type="UniPathway" id="UPA00064">
    <property type="reaction ID" value="UER00091"/>
</dbReference>
<dbReference type="Proteomes" id="UP000001990">
    <property type="component" value="Chromosome"/>
</dbReference>
<dbReference type="GO" id="GO:0005829">
    <property type="term" value="C:cytosol"/>
    <property type="evidence" value="ECO:0007669"/>
    <property type="project" value="TreeGrafter"/>
</dbReference>
<dbReference type="GO" id="GO:0008661">
    <property type="term" value="F:1-deoxy-D-xylulose-5-phosphate synthase activity"/>
    <property type="evidence" value="ECO:0007669"/>
    <property type="project" value="UniProtKB-UniRule"/>
</dbReference>
<dbReference type="GO" id="GO:0000287">
    <property type="term" value="F:magnesium ion binding"/>
    <property type="evidence" value="ECO:0007669"/>
    <property type="project" value="UniProtKB-UniRule"/>
</dbReference>
<dbReference type="GO" id="GO:0030976">
    <property type="term" value="F:thiamine pyrophosphate binding"/>
    <property type="evidence" value="ECO:0007669"/>
    <property type="project" value="UniProtKB-UniRule"/>
</dbReference>
<dbReference type="GO" id="GO:0052865">
    <property type="term" value="P:1-deoxy-D-xylulose 5-phosphate biosynthetic process"/>
    <property type="evidence" value="ECO:0007669"/>
    <property type="project" value="UniProtKB-UniPathway"/>
</dbReference>
<dbReference type="GO" id="GO:0019288">
    <property type="term" value="P:isopentenyl diphosphate biosynthetic process, methylerythritol 4-phosphate pathway"/>
    <property type="evidence" value="ECO:0007669"/>
    <property type="project" value="TreeGrafter"/>
</dbReference>
<dbReference type="GO" id="GO:0016114">
    <property type="term" value="P:terpenoid biosynthetic process"/>
    <property type="evidence" value="ECO:0007669"/>
    <property type="project" value="UniProtKB-UniRule"/>
</dbReference>
<dbReference type="GO" id="GO:0009228">
    <property type="term" value="P:thiamine biosynthetic process"/>
    <property type="evidence" value="ECO:0007669"/>
    <property type="project" value="UniProtKB-UniRule"/>
</dbReference>
<dbReference type="CDD" id="cd02007">
    <property type="entry name" value="TPP_DXS"/>
    <property type="match status" value="1"/>
</dbReference>
<dbReference type="CDD" id="cd07033">
    <property type="entry name" value="TPP_PYR_DXS_TK_like"/>
    <property type="match status" value="1"/>
</dbReference>
<dbReference type="FunFam" id="3.40.50.920:FF:000002">
    <property type="entry name" value="1-deoxy-D-xylulose-5-phosphate synthase"/>
    <property type="match status" value="1"/>
</dbReference>
<dbReference type="FunFam" id="3.40.50.970:FF:000005">
    <property type="entry name" value="1-deoxy-D-xylulose-5-phosphate synthase"/>
    <property type="match status" value="1"/>
</dbReference>
<dbReference type="Gene3D" id="3.40.50.920">
    <property type="match status" value="1"/>
</dbReference>
<dbReference type="Gene3D" id="3.40.50.970">
    <property type="match status" value="2"/>
</dbReference>
<dbReference type="HAMAP" id="MF_00315">
    <property type="entry name" value="DXP_synth"/>
    <property type="match status" value="1"/>
</dbReference>
<dbReference type="InterPro" id="IPR005477">
    <property type="entry name" value="Dxylulose-5-P_synthase"/>
</dbReference>
<dbReference type="InterPro" id="IPR029061">
    <property type="entry name" value="THDP-binding"/>
</dbReference>
<dbReference type="InterPro" id="IPR009014">
    <property type="entry name" value="Transketo_C/PFOR_II"/>
</dbReference>
<dbReference type="InterPro" id="IPR005475">
    <property type="entry name" value="Transketolase-like_Pyr-bd"/>
</dbReference>
<dbReference type="InterPro" id="IPR020826">
    <property type="entry name" value="Transketolase_BS"/>
</dbReference>
<dbReference type="InterPro" id="IPR033248">
    <property type="entry name" value="Transketolase_C"/>
</dbReference>
<dbReference type="InterPro" id="IPR049557">
    <property type="entry name" value="Transketolase_CS"/>
</dbReference>
<dbReference type="NCBIfam" id="TIGR00204">
    <property type="entry name" value="dxs"/>
    <property type="match status" value="1"/>
</dbReference>
<dbReference type="NCBIfam" id="NF003933">
    <property type="entry name" value="PRK05444.2-2"/>
    <property type="match status" value="1"/>
</dbReference>
<dbReference type="PANTHER" id="PTHR43322">
    <property type="entry name" value="1-D-DEOXYXYLULOSE 5-PHOSPHATE SYNTHASE-RELATED"/>
    <property type="match status" value="1"/>
</dbReference>
<dbReference type="PANTHER" id="PTHR43322:SF5">
    <property type="entry name" value="1-DEOXY-D-XYLULOSE-5-PHOSPHATE SYNTHASE, CHLOROPLASTIC"/>
    <property type="match status" value="1"/>
</dbReference>
<dbReference type="Pfam" id="PF13292">
    <property type="entry name" value="DXP_synthase_N"/>
    <property type="match status" value="1"/>
</dbReference>
<dbReference type="Pfam" id="PF02779">
    <property type="entry name" value="Transket_pyr"/>
    <property type="match status" value="1"/>
</dbReference>
<dbReference type="Pfam" id="PF02780">
    <property type="entry name" value="Transketolase_C"/>
    <property type="match status" value="1"/>
</dbReference>
<dbReference type="SMART" id="SM00861">
    <property type="entry name" value="Transket_pyr"/>
    <property type="match status" value="1"/>
</dbReference>
<dbReference type="SUPFAM" id="SSF52518">
    <property type="entry name" value="Thiamin diphosphate-binding fold (THDP-binding)"/>
    <property type="match status" value="2"/>
</dbReference>
<dbReference type="SUPFAM" id="SSF52922">
    <property type="entry name" value="TK C-terminal domain-like"/>
    <property type="match status" value="1"/>
</dbReference>
<dbReference type="PROSITE" id="PS00801">
    <property type="entry name" value="TRANSKETOLASE_1"/>
    <property type="match status" value="1"/>
</dbReference>
<dbReference type="PROSITE" id="PS00802">
    <property type="entry name" value="TRANSKETOLASE_2"/>
    <property type="match status" value="1"/>
</dbReference>
<proteinExistence type="inferred from homology"/>
<reference key="1">
    <citation type="journal article" date="2007" name="Genome Biol.">
        <title>Characterization and modeling of the Haemophilus influenzae core and supragenomes based on the complete genomic sequences of Rd and 12 clinical nontypeable strains.</title>
        <authorList>
            <person name="Hogg J.S."/>
            <person name="Hu F.Z."/>
            <person name="Janto B."/>
            <person name="Boissy R."/>
            <person name="Hayes J."/>
            <person name="Keefe R."/>
            <person name="Post J.C."/>
            <person name="Ehrlich G.D."/>
        </authorList>
    </citation>
    <scope>NUCLEOTIDE SEQUENCE [LARGE SCALE GENOMIC DNA]</scope>
    <source>
        <strain>PittGG</strain>
    </source>
</reference>
<name>DXS_HAEIG</name>
<feature type="chain" id="PRO_1000019032" description="1-deoxy-D-xylulose-5-phosphate synthase">
    <location>
        <begin position="1"/>
        <end position="625"/>
    </location>
</feature>
<feature type="binding site" evidence="1">
    <location>
        <position position="80"/>
    </location>
    <ligand>
        <name>thiamine diphosphate</name>
        <dbReference type="ChEBI" id="CHEBI:58937"/>
    </ligand>
</feature>
<feature type="binding site" evidence="1">
    <location>
        <begin position="121"/>
        <end position="123"/>
    </location>
    <ligand>
        <name>thiamine diphosphate</name>
        <dbReference type="ChEBI" id="CHEBI:58937"/>
    </ligand>
</feature>
<feature type="binding site" evidence="1">
    <location>
        <position position="152"/>
    </location>
    <ligand>
        <name>Mg(2+)</name>
        <dbReference type="ChEBI" id="CHEBI:18420"/>
    </ligand>
</feature>
<feature type="binding site" evidence="1">
    <location>
        <begin position="153"/>
        <end position="154"/>
    </location>
    <ligand>
        <name>thiamine diphosphate</name>
        <dbReference type="ChEBI" id="CHEBI:58937"/>
    </ligand>
</feature>
<feature type="binding site" evidence="1">
    <location>
        <position position="181"/>
    </location>
    <ligand>
        <name>Mg(2+)</name>
        <dbReference type="ChEBI" id="CHEBI:18420"/>
    </ligand>
</feature>
<feature type="binding site" evidence="1">
    <location>
        <position position="181"/>
    </location>
    <ligand>
        <name>thiamine diphosphate</name>
        <dbReference type="ChEBI" id="CHEBI:58937"/>
    </ligand>
</feature>
<feature type="binding site" evidence="1">
    <location>
        <position position="290"/>
    </location>
    <ligand>
        <name>thiamine diphosphate</name>
        <dbReference type="ChEBI" id="CHEBI:58937"/>
    </ligand>
</feature>
<feature type="binding site" evidence="1">
    <location>
        <position position="371"/>
    </location>
    <ligand>
        <name>thiamine diphosphate</name>
        <dbReference type="ChEBI" id="CHEBI:58937"/>
    </ligand>
</feature>
<sequence length="625" mass="68524">MTNNMNNYPLLSLINSPEDLRLLNKDQLPQLCQELRAYLLESVSQTSGHLASGLGTVELTVALHYVYKTPFDQLIWDVGHQAYPHKILTGRREQMSTIRQKGGIHPFPWREESEFDVLSVGHSSTSISAGLGIAVAAERENASRKTVCVIGDGSITAGMAFEALNHAGALHTDMLVILNDNEMSISENVGALNNHLARIFSGSLYSTLRDGSKKILDKVPPIKNFMKKTEEHMKGVMFSPESTLFEELGFNYIGPVDGHNIDELVATLTNMRNLKGPQFLHIKTKKGKGYAPAEKDPIGFHGVPKFDPISGELPKNNSKPTYSKIFGDWLCEMAEKDAKIIGITPAMREGSGMVEFSQRFPKQYFDVAIAEQHAVTFATGLAIGGYKPVVAIYSTFLQRAYDQLIHDVAIQNLPVLFAIDRAGIVGADGATHQGAFDISFMRCIPNMIIMTPSDENECRQMLYTGYQCGKPAAVRYPRGNAVGVKLTPLEMLPIGKSRLIREGQKIAILNFGTLLPSALELSEKLNATVVDMRFVKPIDIEMINMLAQTHDYLVTLEENAIQGGAGSAVAEVLNSSGKSTALLQLGLPDYFIPQATQQEALADLGLDTKGIEEKILNFIAKQGNL</sequence>
<protein>
    <recommendedName>
        <fullName evidence="1">1-deoxy-D-xylulose-5-phosphate synthase</fullName>
        <ecNumber evidence="1">2.2.1.7</ecNumber>
    </recommendedName>
    <alternativeName>
        <fullName evidence="1">1-deoxyxylulose-5-phosphate synthase</fullName>
        <shortName evidence="1">DXP synthase</shortName>
        <shortName evidence="1">DXPS</shortName>
    </alternativeName>
</protein>
<gene>
    <name evidence="1" type="primary">dxs</name>
    <name type="ordered locus">CGSHiGG_01080</name>
</gene>
<evidence type="ECO:0000255" key="1">
    <source>
        <dbReference type="HAMAP-Rule" id="MF_00315"/>
    </source>
</evidence>
<comment type="function">
    <text evidence="1">Catalyzes the acyloin condensation reaction between C atoms 2 and 3 of pyruvate and glyceraldehyde 3-phosphate to yield 1-deoxy-D-xylulose-5-phosphate (DXP).</text>
</comment>
<comment type="catalytic activity">
    <reaction evidence="1">
        <text>D-glyceraldehyde 3-phosphate + pyruvate + H(+) = 1-deoxy-D-xylulose 5-phosphate + CO2</text>
        <dbReference type="Rhea" id="RHEA:12605"/>
        <dbReference type="ChEBI" id="CHEBI:15361"/>
        <dbReference type="ChEBI" id="CHEBI:15378"/>
        <dbReference type="ChEBI" id="CHEBI:16526"/>
        <dbReference type="ChEBI" id="CHEBI:57792"/>
        <dbReference type="ChEBI" id="CHEBI:59776"/>
        <dbReference type="EC" id="2.2.1.7"/>
    </reaction>
</comment>
<comment type="cofactor">
    <cofactor evidence="1">
        <name>Mg(2+)</name>
        <dbReference type="ChEBI" id="CHEBI:18420"/>
    </cofactor>
    <text evidence="1">Binds 1 Mg(2+) ion per subunit.</text>
</comment>
<comment type="cofactor">
    <cofactor evidence="1">
        <name>thiamine diphosphate</name>
        <dbReference type="ChEBI" id="CHEBI:58937"/>
    </cofactor>
    <text evidence="1">Binds 1 thiamine pyrophosphate per subunit.</text>
</comment>
<comment type="pathway">
    <text evidence="1">Metabolic intermediate biosynthesis; 1-deoxy-D-xylulose 5-phosphate biosynthesis; 1-deoxy-D-xylulose 5-phosphate from D-glyceraldehyde 3-phosphate and pyruvate: step 1/1.</text>
</comment>
<comment type="subunit">
    <text evidence="1">Homodimer.</text>
</comment>
<comment type="similarity">
    <text evidence="1">Belongs to the transketolase family. DXPS subfamily.</text>
</comment>
<accession>A5UEV6</accession>
<keyword id="KW-0414">Isoprene biosynthesis</keyword>
<keyword id="KW-0460">Magnesium</keyword>
<keyword id="KW-0479">Metal-binding</keyword>
<keyword id="KW-0784">Thiamine biosynthesis</keyword>
<keyword id="KW-0786">Thiamine pyrophosphate</keyword>
<keyword id="KW-0808">Transferase</keyword>
<organism>
    <name type="scientific">Haemophilus influenzae (strain PittGG)</name>
    <dbReference type="NCBI Taxonomy" id="374931"/>
    <lineage>
        <taxon>Bacteria</taxon>
        <taxon>Pseudomonadati</taxon>
        <taxon>Pseudomonadota</taxon>
        <taxon>Gammaproteobacteria</taxon>
        <taxon>Pasteurellales</taxon>
        <taxon>Pasteurellaceae</taxon>
        <taxon>Haemophilus</taxon>
    </lineage>
</organism>